<organism>
    <name type="scientific">Staphylococcus aureus (strain USA300 / TCH1516)</name>
    <dbReference type="NCBI Taxonomy" id="451516"/>
    <lineage>
        <taxon>Bacteria</taxon>
        <taxon>Bacillati</taxon>
        <taxon>Bacillota</taxon>
        <taxon>Bacilli</taxon>
        <taxon>Bacillales</taxon>
        <taxon>Staphylococcaceae</taxon>
        <taxon>Staphylococcus</taxon>
    </lineage>
</organism>
<sequence>MAVFKVFYQHNRDEVIVRENTQSLYVEAQTEEQVRRYLKDRNFNIEFITKLEGAHLDYEKENSEHFNVEIAK</sequence>
<dbReference type="EC" id="2.7.7.6" evidence="1"/>
<dbReference type="EMBL" id="CP000730">
    <property type="protein sequence ID" value="ABX29052.1"/>
    <property type="molecule type" value="Genomic_DNA"/>
</dbReference>
<dbReference type="RefSeq" id="WP_000257888.1">
    <property type="nucleotide sequence ID" value="NC_010079.1"/>
</dbReference>
<dbReference type="SMR" id="A8Z1M9"/>
<dbReference type="KEGG" id="sax:USA300HOU_1032"/>
<dbReference type="HOGENOM" id="CLU_187518_1_0_9"/>
<dbReference type="BioCyc" id="SAUR451516-HMP:GTV5-1052-MONOMER"/>
<dbReference type="GO" id="GO:0000428">
    <property type="term" value="C:DNA-directed RNA polymerase complex"/>
    <property type="evidence" value="ECO:0007669"/>
    <property type="project" value="UniProtKB-KW"/>
</dbReference>
<dbReference type="GO" id="GO:0003677">
    <property type="term" value="F:DNA binding"/>
    <property type="evidence" value="ECO:0007669"/>
    <property type="project" value="UniProtKB-UniRule"/>
</dbReference>
<dbReference type="GO" id="GO:0003899">
    <property type="term" value="F:DNA-directed RNA polymerase activity"/>
    <property type="evidence" value="ECO:0007669"/>
    <property type="project" value="UniProtKB-UniRule"/>
</dbReference>
<dbReference type="GO" id="GO:0006351">
    <property type="term" value="P:DNA-templated transcription"/>
    <property type="evidence" value="ECO:0007669"/>
    <property type="project" value="UniProtKB-UniRule"/>
</dbReference>
<dbReference type="Gene3D" id="3.10.20.730">
    <property type="entry name" value="RNAP, epsilon subunit-like"/>
    <property type="match status" value="1"/>
</dbReference>
<dbReference type="HAMAP" id="MF_01553">
    <property type="entry name" value="RNApol_bact_RpoY"/>
    <property type="match status" value="1"/>
</dbReference>
<dbReference type="InterPro" id="IPR009907">
    <property type="entry name" value="RpoY"/>
</dbReference>
<dbReference type="NCBIfam" id="NF010188">
    <property type="entry name" value="PRK13667.1"/>
    <property type="match status" value="1"/>
</dbReference>
<dbReference type="Pfam" id="PF07288">
    <property type="entry name" value="RpoY"/>
    <property type="match status" value="1"/>
</dbReference>
<proteinExistence type="inferred from homology"/>
<comment type="function">
    <text evidence="1">A non-essential component of RNA polymerase (RNAP).</text>
</comment>
<comment type="catalytic activity">
    <reaction evidence="1">
        <text>RNA(n) + a ribonucleoside 5'-triphosphate = RNA(n+1) + diphosphate</text>
        <dbReference type="Rhea" id="RHEA:21248"/>
        <dbReference type="Rhea" id="RHEA-COMP:14527"/>
        <dbReference type="Rhea" id="RHEA-COMP:17342"/>
        <dbReference type="ChEBI" id="CHEBI:33019"/>
        <dbReference type="ChEBI" id="CHEBI:61557"/>
        <dbReference type="ChEBI" id="CHEBI:140395"/>
        <dbReference type="EC" id="2.7.7.6"/>
    </reaction>
</comment>
<comment type="subunit">
    <text evidence="1">RNAP is composed of a core of 2 alpha, a beta and a beta' subunit. The core is associated with a delta subunit, and at least one of epsilon or omega. When a sigma factor is associated with the core the holoenzyme is formed, which can initiate transcription.</text>
</comment>
<comment type="similarity">
    <text evidence="1">Belongs to the RNA polymerase subunit epsilon family.</text>
</comment>
<accession>A8Z1M9</accession>
<keyword id="KW-0240">DNA-directed RNA polymerase</keyword>
<keyword id="KW-0548">Nucleotidyltransferase</keyword>
<keyword id="KW-0804">Transcription</keyword>
<keyword id="KW-0808">Transferase</keyword>
<evidence type="ECO:0000255" key="1">
    <source>
        <dbReference type="HAMAP-Rule" id="MF_01553"/>
    </source>
</evidence>
<name>RPOY_STAAT</name>
<gene>
    <name evidence="1" type="primary">rpoY</name>
    <name type="ordered locus">USA300HOU_1032</name>
</gene>
<protein>
    <recommendedName>
        <fullName evidence="1">DNA-directed RNA polymerase subunit epsilon</fullName>
        <shortName evidence="1">RNAP epsilon subunit</shortName>
        <ecNumber evidence="1">2.7.7.6</ecNumber>
    </recommendedName>
    <alternativeName>
        <fullName evidence="1">RNA polymerase epsilon subunit</fullName>
    </alternativeName>
    <alternativeName>
        <fullName evidence="1">Transcriptase subunit epsilon</fullName>
    </alternativeName>
</protein>
<reference key="1">
    <citation type="journal article" date="2007" name="BMC Microbiol.">
        <title>Subtle genetic changes enhance virulence of methicillin resistant and sensitive Staphylococcus aureus.</title>
        <authorList>
            <person name="Highlander S.K."/>
            <person name="Hulten K.G."/>
            <person name="Qin X."/>
            <person name="Jiang H."/>
            <person name="Yerrapragada S."/>
            <person name="Mason E.O. Jr."/>
            <person name="Shang Y."/>
            <person name="Williams T.M."/>
            <person name="Fortunov R.M."/>
            <person name="Liu Y."/>
            <person name="Igboeli O."/>
            <person name="Petrosino J."/>
            <person name="Tirumalai M."/>
            <person name="Uzman A."/>
            <person name="Fox G.E."/>
            <person name="Cardenas A.M."/>
            <person name="Muzny D.M."/>
            <person name="Hemphill L."/>
            <person name="Ding Y."/>
            <person name="Dugan S."/>
            <person name="Blyth P.R."/>
            <person name="Buhay C.J."/>
            <person name="Dinh H.H."/>
            <person name="Hawes A.C."/>
            <person name="Holder M."/>
            <person name="Kovar C.L."/>
            <person name="Lee S.L."/>
            <person name="Liu W."/>
            <person name="Nazareth L.V."/>
            <person name="Wang Q."/>
            <person name="Zhou J."/>
            <person name="Kaplan S.L."/>
            <person name="Weinstock G.M."/>
        </authorList>
    </citation>
    <scope>NUCLEOTIDE SEQUENCE [LARGE SCALE GENOMIC DNA]</scope>
    <source>
        <strain>USA300 / TCH1516</strain>
    </source>
</reference>
<feature type="chain" id="PRO_1000087755" description="DNA-directed RNA polymerase subunit epsilon">
    <location>
        <begin position="1"/>
        <end position="72"/>
    </location>
</feature>